<comment type="function">
    <text evidence="1">Prevents the cell division inhibition by proteins MinC and MinD at internal division sites while permitting inhibition at polar sites. This ensures cell division at the proper site by restricting the formation of a division septum at the midpoint of the long axis of the cell.</text>
</comment>
<comment type="similarity">
    <text evidence="1">Belongs to the MinE family.</text>
</comment>
<reference key="1">
    <citation type="journal article" date="2005" name="Nucleic Acids Res.">
        <title>Genome dynamics and diversity of Shigella species, the etiologic agents of bacillary dysentery.</title>
        <authorList>
            <person name="Yang F."/>
            <person name="Yang J."/>
            <person name="Zhang X."/>
            <person name="Chen L."/>
            <person name="Jiang Y."/>
            <person name="Yan Y."/>
            <person name="Tang X."/>
            <person name="Wang J."/>
            <person name="Xiong Z."/>
            <person name="Dong J."/>
            <person name="Xue Y."/>
            <person name="Zhu Y."/>
            <person name="Xu X."/>
            <person name="Sun L."/>
            <person name="Chen S."/>
            <person name="Nie H."/>
            <person name="Peng J."/>
            <person name="Xu J."/>
            <person name="Wang Y."/>
            <person name="Yuan Z."/>
            <person name="Wen Y."/>
            <person name="Yao Z."/>
            <person name="Shen Y."/>
            <person name="Qiang B."/>
            <person name="Hou Y."/>
            <person name="Yu J."/>
            <person name="Jin Q."/>
        </authorList>
    </citation>
    <scope>NUCLEOTIDE SEQUENCE [LARGE SCALE GENOMIC DNA]</scope>
    <source>
        <strain>Ss046</strain>
    </source>
</reference>
<gene>
    <name evidence="1" type="primary">minE</name>
    <name type="ordered locus">SSON_1163</name>
</gene>
<name>MINE_SHISS</name>
<organism>
    <name type="scientific">Shigella sonnei (strain Ss046)</name>
    <dbReference type="NCBI Taxonomy" id="300269"/>
    <lineage>
        <taxon>Bacteria</taxon>
        <taxon>Pseudomonadati</taxon>
        <taxon>Pseudomonadota</taxon>
        <taxon>Gammaproteobacteria</taxon>
        <taxon>Enterobacterales</taxon>
        <taxon>Enterobacteriaceae</taxon>
        <taxon>Shigella</taxon>
    </lineage>
</organism>
<accession>Q3Z2X5</accession>
<dbReference type="EMBL" id="CP000038">
    <property type="protein sequence ID" value="AAZ87887.1"/>
    <property type="molecule type" value="Genomic_DNA"/>
</dbReference>
<dbReference type="RefSeq" id="WP_001185665.1">
    <property type="nucleotide sequence ID" value="NC_007384.1"/>
</dbReference>
<dbReference type="SMR" id="Q3Z2X5"/>
<dbReference type="GeneID" id="93776260"/>
<dbReference type="KEGG" id="ssn:SSON_1163"/>
<dbReference type="HOGENOM" id="CLU_137929_2_2_6"/>
<dbReference type="Proteomes" id="UP000002529">
    <property type="component" value="Chromosome"/>
</dbReference>
<dbReference type="GO" id="GO:0051301">
    <property type="term" value="P:cell division"/>
    <property type="evidence" value="ECO:0007669"/>
    <property type="project" value="UniProtKB-KW"/>
</dbReference>
<dbReference type="GO" id="GO:0032955">
    <property type="term" value="P:regulation of division septum assembly"/>
    <property type="evidence" value="ECO:0007669"/>
    <property type="project" value="InterPro"/>
</dbReference>
<dbReference type="FunFam" id="3.30.1070.10:FF:000001">
    <property type="entry name" value="Cell division topological specificity factor"/>
    <property type="match status" value="1"/>
</dbReference>
<dbReference type="Gene3D" id="3.30.1070.10">
    <property type="entry name" value="Cell division topological specificity factor MinE"/>
    <property type="match status" value="1"/>
</dbReference>
<dbReference type="HAMAP" id="MF_00262">
    <property type="entry name" value="MinE"/>
    <property type="match status" value="1"/>
</dbReference>
<dbReference type="InterPro" id="IPR005527">
    <property type="entry name" value="MinE"/>
</dbReference>
<dbReference type="InterPro" id="IPR036707">
    <property type="entry name" value="MinE_sf"/>
</dbReference>
<dbReference type="NCBIfam" id="TIGR01215">
    <property type="entry name" value="minE"/>
    <property type="match status" value="1"/>
</dbReference>
<dbReference type="NCBIfam" id="NF001422">
    <property type="entry name" value="PRK00296.1"/>
    <property type="match status" value="1"/>
</dbReference>
<dbReference type="Pfam" id="PF03776">
    <property type="entry name" value="MinE"/>
    <property type="match status" value="1"/>
</dbReference>
<dbReference type="SUPFAM" id="SSF55229">
    <property type="entry name" value="Cell division protein MinE topological specificity domain"/>
    <property type="match status" value="1"/>
</dbReference>
<keyword id="KW-0131">Cell cycle</keyword>
<keyword id="KW-0132">Cell division</keyword>
<keyword id="KW-1185">Reference proteome</keyword>
<sequence>MALLDFFLSRKKNTANIAKERLQIIVAERRRSDAEPHYLPQLRKDILEVICKYVQIDPEMVTVQLEQKDGDISILELNVTLPEAEELK</sequence>
<evidence type="ECO:0000255" key="1">
    <source>
        <dbReference type="HAMAP-Rule" id="MF_00262"/>
    </source>
</evidence>
<feature type="chain" id="PRO_0000298192" description="Cell division topological specificity factor">
    <location>
        <begin position="1"/>
        <end position="88"/>
    </location>
</feature>
<protein>
    <recommendedName>
        <fullName evidence="1">Cell division topological specificity factor</fullName>
    </recommendedName>
</protein>
<proteinExistence type="inferred from homology"/>